<reference key="1">
    <citation type="journal article" date="2010" name="J. Bacteriol.">
        <title>Genome sequence of the deep-rooted Yersinia pestis strain Angola reveals new insights into the evolution and pangenome of the plague bacterium.</title>
        <authorList>
            <person name="Eppinger M."/>
            <person name="Worsham P.L."/>
            <person name="Nikolich M.P."/>
            <person name="Riley D.R."/>
            <person name="Sebastian Y."/>
            <person name="Mou S."/>
            <person name="Achtman M."/>
            <person name="Lindler L.E."/>
            <person name="Ravel J."/>
        </authorList>
    </citation>
    <scope>NUCLEOTIDE SEQUENCE [LARGE SCALE GENOMIC DNA]</scope>
    <source>
        <strain>Angola</strain>
    </source>
</reference>
<feature type="chain" id="PRO_1000136058" description="Ribosome rescue factor SmrB">
    <location>
        <begin position="1"/>
        <end position="176"/>
    </location>
</feature>
<feature type="domain" description="Smr" evidence="1">
    <location>
        <begin position="98"/>
        <end position="173"/>
    </location>
</feature>
<accession>A9R7W5</accession>
<proteinExistence type="inferred from homology"/>
<sequence length="176" mass="20094">MKKKYHLTPDELQLFKESIAGAKKLRQDTIVHHTPPKLGKKIAPERLLQEQVDASYYFSDEFQPLLDTDGPTRYVRPGVDNFEVKKLRRGDYSPEMFLDLHGLTQKQAKQELGALIAACKREHVHCACVMHGHGKHVLKQQTPLWMAQHPDVLAFHQAPKEWGGTAALLLLIELEE</sequence>
<name>SMRB_YERPG</name>
<evidence type="ECO:0000255" key="1">
    <source>
        <dbReference type="HAMAP-Rule" id="MF_01042"/>
    </source>
</evidence>
<protein>
    <recommendedName>
        <fullName evidence="1">Ribosome rescue factor SmrB</fullName>
        <ecNumber evidence="1">3.1.-.-</ecNumber>
    </recommendedName>
</protein>
<dbReference type="EC" id="3.1.-.-" evidence="1"/>
<dbReference type="EMBL" id="CP000901">
    <property type="protein sequence ID" value="ABX86395.1"/>
    <property type="molecule type" value="Genomic_DNA"/>
</dbReference>
<dbReference type="RefSeq" id="WP_002227846.1">
    <property type="nucleotide sequence ID" value="NZ_CP009935.1"/>
</dbReference>
<dbReference type="SMR" id="A9R7W5"/>
<dbReference type="GeneID" id="57975940"/>
<dbReference type="KEGG" id="ypg:YpAngola_A0379"/>
<dbReference type="PATRIC" id="fig|349746.12.peg.1328"/>
<dbReference type="GO" id="GO:0004521">
    <property type="term" value="F:RNA endonuclease activity"/>
    <property type="evidence" value="ECO:0007669"/>
    <property type="project" value="UniProtKB-UniRule"/>
</dbReference>
<dbReference type="GO" id="GO:0019843">
    <property type="term" value="F:rRNA binding"/>
    <property type="evidence" value="ECO:0007669"/>
    <property type="project" value="UniProtKB-UniRule"/>
</dbReference>
<dbReference type="GO" id="GO:0072344">
    <property type="term" value="P:rescue of stalled ribosome"/>
    <property type="evidence" value="ECO:0007669"/>
    <property type="project" value="UniProtKB-UniRule"/>
</dbReference>
<dbReference type="Gene3D" id="3.30.1370.110">
    <property type="match status" value="1"/>
</dbReference>
<dbReference type="HAMAP" id="MF_01042">
    <property type="entry name" value="SmrB"/>
    <property type="match status" value="1"/>
</dbReference>
<dbReference type="InterPro" id="IPR002625">
    <property type="entry name" value="Smr_dom"/>
</dbReference>
<dbReference type="InterPro" id="IPR036063">
    <property type="entry name" value="Smr_dom_sf"/>
</dbReference>
<dbReference type="InterPro" id="IPR022990">
    <property type="entry name" value="SmrB-like"/>
</dbReference>
<dbReference type="NCBIfam" id="NF003432">
    <property type="entry name" value="PRK04946.1"/>
    <property type="match status" value="1"/>
</dbReference>
<dbReference type="PANTHER" id="PTHR35562">
    <property type="entry name" value="DNA ENDONUCLEASE SMRA-RELATED"/>
    <property type="match status" value="1"/>
</dbReference>
<dbReference type="PANTHER" id="PTHR35562:SF1">
    <property type="entry name" value="UPF0115 PROTEIN YFCN"/>
    <property type="match status" value="1"/>
</dbReference>
<dbReference type="Pfam" id="PF01713">
    <property type="entry name" value="Smr"/>
    <property type="match status" value="1"/>
</dbReference>
<dbReference type="SMART" id="SM00463">
    <property type="entry name" value="SMR"/>
    <property type="match status" value="1"/>
</dbReference>
<dbReference type="SUPFAM" id="SSF160443">
    <property type="entry name" value="SMR domain-like"/>
    <property type="match status" value="1"/>
</dbReference>
<dbReference type="PROSITE" id="PS50828">
    <property type="entry name" value="SMR"/>
    <property type="match status" value="1"/>
</dbReference>
<comment type="function">
    <text evidence="1">Acts as a ribosome collision sensor. Detects stalled/collided disomes (pairs of ribosomes where the leading ribosome is stalled and a second ribosome has collided with it) and endonucleolytically cleaves mRNA at the 5' boundary of the stalled ribosome. Stalled/collided disomes form a new interface (primarily via the 30S subunits) that binds SmrB. Cleaved mRNA becomes available for tmRNA ligation, leading to ribosomal subunit dissociation and rescue of stalled ribosomes.</text>
</comment>
<comment type="subunit">
    <text evidence="1">Associates with collided ribosomes, but not with correctly translating polysomes.</text>
</comment>
<comment type="similarity">
    <text evidence="1">Belongs to the SmrB family.</text>
</comment>
<keyword id="KW-0255">Endonuclease</keyword>
<keyword id="KW-0378">Hydrolase</keyword>
<keyword id="KW-0540">Nuclease</keyword>
<keyword id="KW-0694">RNA-binding</keyword>
<keyword id="KW-0699">rRNA-binding</keyword>
<organism>
    <name type="scientific">Yersinia pestis bv. Antiqua (strain Angola)</name>
    <dbReference type="NCBI Taxonomy" id="349746"/>
    <lineage>
        <taxon>Bacteria</taxon>
        <taxon>Pseudomonadati</taxon>
        <taxon>Pseudomonadota</taxon>
        <taxon>Gammaproteobacteria</taxon>
        <taxon>Enterobacterales</taxon>
        <taxon>Yersiniaceae</taxon>
        <taxon>Yersinia</taxon>
    </lineage>
</organism>
<gene>
    <name evidence="1" type="primary">smrB</name>
    <name type="ordered locus">YpAngola_A0379</name>
</gene>